<comment type="function">
    <text evidence="1 2">Catalyzes the condensation of 4-hydroxybenzoate (HB) with 5-phospho-alpha-D-ribose 1-diphosphate (PRPP) to produce beta-ribofuranosylphenol 5'-phosphate (beta-RFH-P) (By similarity). Also catalyzes the condensation of 4-aminobenzoate (pABA) with PRPP to produce beta-ribofuranosylaminobenzene 5'-phosphate (beta-RFA-P) (PubMed:31663056). Only 4-hydroxybenzoate is known to be biosynthesized by methanogenic archaea, but 4-aminobenzoate can be used as substrate by growing methanogens when it is present in the growth medium (By similarity).</text>
</comment>
<comment type="catalytic activity">
    <reaction evidence="1">
        <text>5-phospho-alpha-D-ribose 1-diphosphate + 4-hydroxybenzoate + H(+) = 4-(beta-D-ribofuranosyl)phenol 5'-phosphate + CO2 + diphosphate</text>
        <dbReference type="Rhea" id="RHEA:48556"/>
        <dbReference type="ChEBI" id="CHEBI:15378"/>
        <dbReference type="ChEBI" id="CHEBI:16526"/>
        <dbReference type="ChEBI" id="CHEBI:17879"/>
        <dbReference type="ChEBI" id="CHEBI:33019"/>
        <dbReference type="ChEBI" id="CHEBI:58017"/>
        <dbReference type="ChEBI" id="CHEBI:82767"/>
        <dbReference type="EC" id="2.4.2.54"/>
    </reaction>
    <physiologicalReaction direction="left-to-right" evidence="1">
        <dbReference type="Rhea" id="RHEA:48557"/>
    </physiologicalReaction>
</comment>
<comment type="catalytic activity">
    <reaction evidence="2">
        <text>4-aminobenzoate + 5-phospho-alpha-D-ribose 1-diphosphate + H(+) = 4-(beta-D-ribofuranosyl)aminobenzene 5'-phosphate + CO2 + diphosphate</text>
        <dbReference type="Rhea" id="RHEA:35815"/>
        <dbReference type="ChEBI" id="CHEBI:15378"/>
        <dbReference type="ChEBI" id="CHEBI:16526"/>
        <dbReference type="ChEBI" id="CHEBI:17836"/>
        <dbReference type="ChEBI" id="CHEBI:33019"/>
        <dbReference type="ChEBI" id="CHEBI:58017"/>
        <dbReference type="ChEBI" id="CHEBI:72778"/>
    </reaction>
    <physiologicalReaction direction="left-to-right" evidence="2">
        <dbReference type="Rhea" id="RHEA:35816"/>
    </physiologicalReaction>
</comment>
<comment type="cofactor">
    <cofactor evidence="2">
        <name>Mg(2+)</name>
        <dbReference type="ChEBI" id="CHEBI:18420"/>
    </cofactor>
</comment>
<comment type="biophysicochemical properties">
    <kinetics>
        <KM>4.5 mM for pABA (at 70 degrees Celsius)</KM>
        <KM>3.9 mM for pABA (at 50 degrees Celsius)</KM>
        <Vmax>190.0 nmol/min/mg enzyme with pABA as substrate (at 70 degrees Celsius)</Vmax>
        <Vmax>1.45 nmol/min/mg enzyme with pABA as substrate (at 50 degrees Celsius)</Vmax>
    </kinetics>
    <phDependence>
        <text evidence="2">Optimum pH is 7.0.</text>
    </phDependence>
    <temperatureDependence>
        <text evidence="2">Optimum temperature is 70 degrees Celsius.</text>
    </temperatureDependence>
</comment>
<comment type="pathway">
    <text evidence="1">Cofactor biosynthesis; 5,6,7,8-tetrahydromethanopterin biosynthesis.</text>
</comment>
<comment type="subunit">
    <text evidence="2">Homodimer.</text>
</comment>
<comment type="similarity">
    <text evidence="4">Belongs to the beta-RFA-P synthase family.</text>
</comment>
<feature type="chain" id="PRO_0000107321" description="Beta-ribofuranosylphenol 5'-phosphate synthase">
    <location>
        <begin position="1"/>
        <end position="329"/>
    </location>
</feature>
<feature type="mutagenesis site" description="3-fold increase in Km for pABA and 3-fold decrease in Vmax." evidence="2">
    <original>D</original>
    <variation>N</variation>
    <location>
        <position position="19"/>
    </location>
</feature>
<feature type="mutagenesis site" description="10-fold increase in Km for pABA and 3-fold increase in Vmax." evidence="2">
    <original>R</original>
    <variation>K</variation>
    <location>
        <position position="26"/>
    </location>
</feature>
<keyword id="KW-0328">Glycosyltransferase</keyword>
<keyword id="KW-0460">Magnesium</keyword>
<keyword id="KW-1185">Reference proteome</keyword>
<keyword id="KW-0808">Transferase</keyword>
<dbReference type="EC" id="2.4.2.54" evidence="1"/>
<dbReference type="EMBL" id="AE000666">
    <property type="protein sequence ID" value="AAB85328.1"/>
    <property type="molecule type" value="Genomic_DNA"/>
</dbReference>
<dbReference type="PIR" id="G69210">
    <property type="entry name" value="G69210"/>
</dbReference>
<dbReference type="RefSeq" id="WP_010876463.1">
    <property type="nucleotide sequence ID" value="NC_000916.1"/>
</dbReference>
<dbReference type="SMR" id="O26918"/>
<dbReference type="FunCoup" id="O26918">
    <property type="interactions" value="1"/>
</dbReference>
<dbReference type="STRING" id="187420.MTH_830"/>
<dbReference type="PaxDb" id="187420-MTH_830"/>
<dbReference type="EnsemblBacteria" id="AAB85328">
    <property type="protein sequence ID" value="AAB85328"/>
    <property type="gene ID" value="MTH_830"/>
</dbReference>
<dbReference type="GeneID" id="1471238"/>
<dbReference type="KEGG" id="mth:MTH_830"/>
<dbReference type="PATRIC" id="fig|187420.15.peg.813"/>
<dbReference type="HOGENOM" id="CLU_061764_0_0_2"/>
<dbReference type="InParanoid" id="O26918"/>
<dbReference type="UniPathway" id="UPA00065"/>
<dbReference type="Proteomes" id="UP000005223">
    <property type="component" value="Chromosome"/>
</dbReference>
<dbReference type="GO" id="GO:0005524">
    <property type="term" value="F:ATP binding"/>
    <property type="evidence" value="ECO:0007669"/>
    <property type="project" value="InterPro"/>
</dbReference>
<dbReference type="GO" id="GO:0043793">
    <property type="term" value="F:beta-ribofuranosylaminobenzene 5'-phosphate synthase activity"/>
    <property type="evidence" value="ECO:0007669"/>
    <property type="project" value="UniProtKB-EC"/>
</dbReference>
<dbReference type="Gene3D" id="3.30.230.10">
    <property type="match status" value="1"/>
</dbReference>
<dbReference type="InterPro" id="IPR053442">
    <property type="entry name" value="Beta-RFA-P_synthase"/>
</dbReference>
<dbReference type="InterPro" id="IPR013750">
    <property type="entry name" value="GHMP_kinase_C_dom"/>
</dbReference>
<dbReference type="InterPro" id="IPR006204">
    <property type="entry name" value="GHMP_kinase_N_dom"/>
</dbReference>
<dbReference type="InterPro" id="IPR004422">
    <property type="entry name" value="RFAP_synthase"/>
</dbReference>
<dbReference type="InterPro" id="IPR020568">
    <property type="entry name" value="Ribosomal_Su5_D2-typ_SF"/>
</dbReference>
<dbReference type="InterPro" id="IPR014721">
    <property type="entry name" value="Ribsml_uS5_D2-typ_fold_subgr"/>
</dbReference>
<dbReference type="NCBIfam" id="TIGR00144">
    <property type="entry name" value="beta_RFAP_syn"/>
    <property type="match status" value="1"/>
</dbReference>
<dbReference type="NCBIfam" id="NF040726">
    <property type="entry name" value="BetaRFA-P_synth"/>
    <property type="match status" value="1"/>
</dbReference>
<dbReference type="PANTHER" id="PTHR20861:SF6">
    <property type="entry name" value="BETA-RIBOFURANOSYLPHENOL 5'-PHOSPHATE SYNTHASE"/>
    <property type="match status" value="1"/>
</dbReference>
<dbReference type="PANTHER" id="PTHR20861">
    <property type="entry name" value="HOMOSERINE/4-DIPHOSPHOCYTIDYL-2-C-METHYL-D-ERYTHRITOL KINASE"/>
    <property type="match status" value="1"/>
</dbReference>
<dbReference type="Pfam" id="PF08544">
    <property type="entry name" value="GHMP_kinases_C"/>
    <property type="match status" value="1"/>
</dbReference>
<dbReference type="Pfam" id="PF00288">
    <property type="entry name" value="GHMP_kinases_N"/>
    <property type="match status" value="1"/>
</dbReference>
<dbReference type="PIRSF" id="PIRSF004884">
    <property type="entry name" value="Sugar_kin_arch"/>
    <property type="match status" value="1"/>
</dbReference>
<dbReference type="SUPFAM" id="SSF54211">
    <property type="entry name" value="Ribosomal protein S5 domain 2-like"/>
    <property type="match status" value="1"/>
</dbReference>
<organism>
    <name type="scientific">Methanothermobacter thermautotrophicus (strain ATCC 29096 / DSM 1053 / JCM 10044 / NBRC 100330 / Delta H)</name>
    <name type="common">Methanobacterium thermoautotrophicum</name>
    <dbReference type="NCBI Taxonomy" id="187420"/>
    <lineage>
        <taxon>Archaea</taxon>
        <taxon>Methanobacteriati</taxon>
        <taxon>Methanobacteriota</taxon>
        <taxon>Methanomada group</taxon>
        <taxon>Methanobacteria</taxon>
        <taxon>Methanobacteriales</taxon>
        <taxon>Methanobacteriaceae</taxon>
        <taxon>Methanothermobacter</taxon>
    </lineage>
</organism>
<sequence length="329" mass="35603">MVIELIINTPSRLHLTLIDLNGERGRLDGGVGITLNEPELVVGLEASDDMGVEFTSHAEGKLREEYRSKIMEAARRTLKHIGSDEKFHFTVRSMFPAHSGLGSGTQLSLATARLVAEYHGMKFTARELAHIVGRGGTSGIGVASFEDGGFIVDAGHSSREKSDFLPSSASSASPPPVIARYDFPEEWNIIIAIPEIDRSVSGRREVNIFQEYCPLPLRDVERLSHIILMKMMPAILEGDIEAFGESVNEIQGTGFKRIERELQDPLIDRIIDSMISAGAPGAGMSSFGPAVYSVTDEKPGNVAGAVAEIMGPGRIIVTGGRNRGAFMIK</sequence>
<name>RFHPS_METTH</name>
<gene>
    <name type="ordered locus">MTH_830</name>
</gene>
<proteinExistence type="evidence at protein level"/>
<accession>O26918</accession>
<evidence type="ECO:0000250" key="1">
    <source>
        <dbReference type="UniProtKB" id="Q58822"/>
    </source>
</evidence>
<evidence type="ECO:0000269" key="2">
    <source>
    </source>
</evidence>
<evidence type="ECO:0000303" key="3">
    <source>
    </source>
</evidence>
<evidence type="ECO:0000305" key="4"/>
<reference key="1">
    <citation type="journal article" date="1997" name="J. Bacteriol.">
        <title>Complete genome sequence of Methanobacterium thermoautotrophicum deltaH: functional analysis and comparative genomics.</title>
        <authorList>
            <person name="Smith D.R."/>
            <person name="Doucette-Stamm L.A."/>
            <person name="Deloughery C."/>
            <person name="Lee H.-M."/>
            <person name="Dubois J."/>
            <person name="Aldredge T."/>
            <person name="Bashirzadeh R."/>
            <person name="Blakely D."/>
            <person name="Cook R."/>
            <person name="Gilbert K."/>
            <person name="Harrison D."/>
            <person name="Hoang L."/>
            <person name="Keagle P."/>
            <person name="Lumm W."/>
            <person name="Pothier B."/>
            <person name="Qiu D."/>
            <person name="Spadafora R."/>
            <person name="Vicare R."/>
            <person name="Wang Y."/>
            <person name="Wierzbowski J."/>
            <person name="Gibson R."/>
            <person name="Jiwani N."/>
            <person name="Caruso A."/>
            <person name="Bush D."/>
            <person name="Safer H."/>
            <person name="Patwell D."/>
            <person name="Prabhakar S."/>
            <person name="McDougall S."/>
            <person name="Shimer G."/>
            <person name="Goyal A."/>
            <person name="Pietrovski S."/>
            <person name="Church G.M."/>
            <person name="Daniels C.J."/>
            <person name="Mao J.-I."/>
            <person name="Rice P."/>
            <person name="Noelling J."/>
            <person name="Reeve J.N."/>
        </authorList>
    </citation>
    <scope>NUCLEOTIDE SEQUENCE [LARGE SCALE GENOMIC DNA]</scope>
    <source>
        <strain>ATCC 29096 / DSM 1053 / JCM 10044 / NBRC 100330 / Delta H</strain>
    </source>
</reference>
<reference key="2">
    <citation type="journal article" date="2019" name="AIMS Microbiol.">
        <title>Purification, kinetic characterization, and site-directed mutagenesis of Methanothermobacter thermautotrophicus RFAP Synthase Produced in Escherichia coli.</title>
        <authorList>
            <person name="Bechard M.E."/>
            <person name="Farahani P."/>
            <person name="Greene D."/>
            <person name="Pham A."/>
            <person name="Orry A."/>
            <person name="Rasche M.E."/>
        </authorList>
    </citation>
    <scope>FUNCTION</scope>
    <scope>CATALYTIC ACTIVITY</scope>
    <scope>COFACTOR</scope>
    <scope>BIOPHYSICOCHEMICAL PROPERTIES</scope>
    <scope>SUBUNIT</scope>
    <scope>MUTAGENESIS OF ASP-19 AND ARG-26</scope>
</reference>
<protein>
    <recommendedName>
        <fullName evidence="4">Beta-ribofuranosylphenol 5'-phosphate synthase</fullName>
        <ecNumber evidence="1">2.4.2.54</ecNumber>
    </recommendedName>
    <alternativeName>
        <fullName evidence="3">Beta-ribofuranosylaminobenzene 5'-phosphate synthase</fullName>
        <shortName>Beta-RFA-P synthase</shortName>
        <shortName evidence="3">RFAP synthase</shortName>
    </alternativeName>
    <alternativeName>
        <fullName evidence="4">Beta-ribofuranosylhydroxybenzene 5'-phosphate synthase</fullName>
        <shortName>Beta-RFH-P synthase</shortName>
    </alternativeName>
</protein>